<name>NTDP_LACLS</name>
<dbReference type="EC" id="3.6.1.15" evidence="1"/>
<dbReference type="EC" id="3.6.1.6" evidence="1"/>
<dbReference type="EMBL" id="CP000425">
    <property type="protein sequence ID" value="ABJ72592.1"/>
    <property type="molecule type" value="Genomic_DNA"/>
</dbReference>
<dbReference type="RefSeq" id="WP_003130958.1">
    <property type="nucleotide sequence ID" value="NC_008527.1"/>
</dbReference>
<dbReference type="SMR" id="Q02ZN0"/>
<dbReference type="KEGG" id="llc:LACR_1055"/>
<dbReference type="HOGENOM" id="CLU_109787_1_0_9"/>
<dbReference type="Proteomes" id="UP000000240">
    <property type="component" value="Chromosome"/>
</dbReference>
<dbReference type="GO" id="GO:0000287">
    <property type="term" value="F:magnesium ion binding"/>
    <property type="evidence" value="ECO:0007669"/>
    <property type="project" value="UniProtKB-UniRule"/>
</dbReference>
<dbReference type="GO" id="GO:0017110">
    <property type="term" value="F:nucleoside diphosphate phosphatase activity"/>
    <property type="evidence" value="ECO:0007669"/>
    <property type="project" value="UniProtKB-UniRule"/>
</dbReference>
<dbReference type="GO" id="GO:0017111">
    <property type="term" value="F:ribonucleoside triphosphate phosphatase activity"/>
    <property type="evidence" value="ECO:0007669"/>
    <property type="project" value="UniProtKB-UniRule"/>
</dbReference>
<dbReference type="Gene3D" id="2.40.380.10">
    <property type="entry name" value="FomD-like"/>
    <property type="match status" value="1"/>
</dbReference>
<dbReference type="HAMAP" id="MF_01568">
    <property type="entry name" value="Ntdp"/>
    <property type="match status" value="1"/>
</dbReference>
<dbReference type="InterPro" id="IPR007295">
    <property type="entry name" value="DUF402"/>
</dbReference>
<dbReference type="InterPro" id="IPR035930">
    <property type="entry name" value="FomD-like_sf"/>
</dbReference>
<dbReference type="InterPro" id="IPR050212">
    <property type="entry name" value="Ntdp-like"/>
</dbReference>
<dbReference type="InterPro" id="IPR016882">
    <property type="entry name" value="SA1684"/>
</dbReference>
<dbReference type="NCBIfam" id="NF010183">
    <property type="entry name" value="PRK13662.1"/>
    <property type="match status" value="1"/>
</dbReference>
<dbReference type="PANTHER" id="PTHR39159">
    <property type="match status" value="1"/>
</dbReference>
<dbReference type="PANTHER" id="PTHR39159:SF1">
    <property type="entry name" value="UPF0374 PROTEIN YGAC"/>
    <property type="match status" value="1"/>
</dbReference>
<dbReference type="Pfam" id="PF04167">
    <property type="entry name" value="DUF402"/>
    <property type="match status" value="1"/>
</dbReference>
<dbReference type="PIRSF" id="PIRSF028345">
    <property type="entry name" value="UCP028345"/>
    <property type="match status" value="1"/>
</dbReference>
<dbReference type="SUPFAM" id="SSF159234">
    <property type="entry name" value="FomD-like"/>
    <property type="match status" value="1"/>
</dbReference>
<proteinExistence type="inferred from homology"/>
<gene>
    <name type="ordered locus">LACR_1055</name>
</gene>
<evidence type="ECO:0000255" key="1">
    <source>
        <dbReference type="HAMAP-Rule" id="MF_01568"/>
    </source>
</evidence>
<accession>Q02ZN0</accession>
<organism>
    <name type="scientific">Lactococcus lactis subsp. cremoris (strain SK11)</name>
    <dbReference type="NCBI Taxonomy" id="272622"/>
    <lineage>
        <taxon>Bacteria</taxon>
        <taxon>Bacillati</taxon>
        <taxon>Bacillota</taxon>
        <taxon>Bacilli</taxon>
        <taxon>Lactobacillales</taxon>
        <taxon>Streptococcaceae</taxon>
        <taxon>Lactococcus</taxon>
        <taxon>Lactococcus cremoris subsp. cremoris</taxon>
    </lineage>
</organism>
<sequence>MKIPKEGDFITIQSYKHDGNLHRTWRDTMVLKTNENSIIGVNDHTLVTESDDRRWVTREPAIVYFHKKFWFNIIAMIREEGVSYYCNLASPFVLDNEALKYIDYDLDVKVFKDGEKKLLDVEEYERHRRKMHYPKEIDHILKENVKILVDWINNEKGPFSKEYVEIWYNRYHQLKK</sequence>
<keyword id="KW-0378">Hydrolase</keyword>
<keyword id="KW-0460">Magnesium</keyword>
<keyword id="KW-0479">Metal-binding</keyword>
<feature type="chain" id="PRO_1000069106" description="Nucleoside triphosphate/diphosphate phosphatase">
    <location>
        <begin position="1"/>
        <end position="176"/>
    </location>
</feature>
<feature type="active site" description="Proton donor" evidence="1">
    <location>
        <position position="23"/>
    </location>
</feature>
<feature type="binding site" evidence="1">
    <location>
        <position position="87"/>
    </location>
    <ligand>
        <name>Mg(2+)</name>
        <dbReference type="ChEBI" id="CHEBI:18420"/>
        <label>1</label>
    </ligand>
</feature>
<feature type="binding site" evidence="1">
    <location>
        <position position="103"/>
    </location>
    <ligand>
        <name>Mg(2+)</name>
        <dbReference type="ChEBI" id="CHEBI:18420"/>
        <label>1</label>
    </ligand>
</feature>
<feature type="binding site" evidence="1">
    <location>
        <position position="105"/>
    </location>
    <ligand>
        <name>Mg(2+)</name>
        <dbReference type="ChEBI" id="CHEBI:18420"/>
        <label>2</label>
    </ligand>
</feature>
<feature type="binding site" evidence="1">
    <location>
        <position position="107"/>
    </location>
    <ligand>
        <name>Mg(2+)</name>
        <dbReference type="ChEBI" id="CHEBI:18420"/>
        <label>1</label>
    </ligand>
</feature>
<feature type="binding site" evidence="1">
    <location>
        <position position="107"/>
    </location>
    <ligand>
        <name>Mg(2+)</name>
        <dbReference type="ChEBI" id="CHEBI:18420"/>
        <label>2</label>
    </ligand>
</feature>
<feature type="binding site" evidence="1">
    <location>
        <position position="120"/>
    </location>
    <ligand>
        <name>Mg(2+)</name>
        <dbReference type="ChEBI" id="CHEBI:18420"/>
        <label>2</label>
    </ligand>
</feature>
<feature type="binding site" evidence="1">
    <location>
        <position position="123"/>
    </location>
    <ligand>
        <name>Mg(2+)</name>
        <dbReference type="ChEBI" id="CHEBI:18420"/>
        <label>2</label>
    </ligand>
</feature>
<protein>
    <recommendedName>
        <fullName evidence="1">Nucleoside triphosphate/diphosphate phosphatase</fullName>
        <ecNumber evidence="1">3.6.1.15</ecNumber>
        <ecNumber evidence="1">3.6.1.6</ecNumber>
    </recommendedName>
</protein>
<reference key="1">
    <citation type="journal article" date="2006" name="Proc. Natl. Acad. Sci. U.S.A.">
        <title>Comparative genomics of the lactic acid bacteria.</title>
        <authorList>
            <person name="Makarova K.S."/>
            <person name="Slesarev A."/>
            <person name="Wolf Y.I."/>
            <person name="Sorokin A."/>
            <person name="Mirkin B."/>
            <person name="Koonin E.V."/>
            <person name="Pavlov A."/>
            <person name="Pavlova N."/>
            <person name="Karamychev V."/>
            <person name="Polouchine N."/>
            <person name="Shakhova V."/>
            <person name="Grigoriev I."/>
            <person name="Lou Y."/>
            <person name="Rohksar D."/>
            <person name="Lucas S."/>
            <person name="Huang K."/>
            <person name="Goodstein D.M."/>
            <person name="Hawkins T."/>
            <person name="Plengvidhya V."/>
            <person name="Welker D."/>
            <person name="Hughes J."/>
            <person name="Goh Y."/>
            <person name="Benson A."/>
            <person name="Baldwin K."/>
            <person name="Lee J.-H."/>
            <person name="Diaz-Muniz I."/>
            <person name="Dosti B."/>
            <person name="Smeianov V."/>
            <person name="Wechter W."/>
            <person name="Barabote R."/>
            <person name="Lorca G."/>
            <person name="Altermann E."/>
            <person name="Barrangou R."/>
            <person name="Ganesan B."/>
            <person name="Xie Y."/>
            <person name="Rawsthorne H."/>
            <person name="Tamir D."/>
            <person name="Parker C."/>
            <person name="Breidt F."/>
            <person name="Broadbent J.R."/>
            <person name="Hutkins R."/>
            <person name="O'Sullivan D."/>
            <person name="Steele J."/>
            <person name="Unlu G."/>
            <person name="Saier M.H. Jr."/>
            <person name="Klaenhammer T."/>
            <person name="Richardson P."/>
            <person name="Kozyavkin S."/>
            <person name="Weimer B.C."/>
            <person name="Mills D.A."/>
        </authorList>
    </citation>
    <scope>NUCLEOTIDE SEQUENCE [LARGE SCALE GENOMIC DNA]</scope>
    <source>
        <strain>SK11</strain>
    </source>
</reference>
<comment type="function">
    <text evidence="1">Has nucleoside phosphatase activity towards nucleoside triphosphates and nucleoside diphosphates.</text>
</comment>
<comment type="catalytic activity">
    <reaction evidence="1">
        <text>a ribonucleoside 5'-triphosphate + H2O = a ribonucleoside 5'-diphosphate + phosphate + H(+)</text>
        <dbReference type="Rhea" id="RHEA:23680"/>
        <dbReference type="ChEBI" id="CHEBI:15377"/>
        <dbReference type="ChEBI" id="CHEBI:15378"/>
        <dbReference type="ChEBI" id="CHEBI:43474"/>
        <dbReference type="ChEBI" id="CHEBI:57930"/>
        <dbReference type="ChEBI" id="CHEBI:61557"/>
        <dbReference type="EC" id="3.6.1.15"/>
    </reaction>
</comment>
<comment type="catalytic activity">
    <reaction evidence="1">
        <text>a ribonucleoside 5'-diphosphate + H2O = a ribonucleoside 5'-phosphate + phosphate + H(+)</text>
        <dbReference type="Rhea" id="RHEA:36799"/>
        <dbReference type="ChEBI" id="CHEBI:15377"/>
        <dbReference type="ChEBI" id="CHEBI:15378"/>
        <dbReference type="ChEBI" id="CHEBI:43474"/>
        <dbReference type="ChEBI" id="CHEBI:57930"/>
        <dbReference type="ChEBI" id="CHEBI:58043"/>
        <dbReference type="EC" id="3.6.1.6"/>
    </reaction>
</comment>
<comment type="cofactor">
    <cofactor evidence="1">
        <name>Mg(2+)</name>
        <dbReference type="ChEBI" id="CHEBI:18420"/>
    </cofactor>
</comment>
<comment type="similarity">
    <text evidence="1">Belongs to the Ntdp family.</text>
</comment>